<evidence type="ECO:0000255" key="1">
    <source>
        <dbReference type="HAMAP-Rule" id="MF_00175"/>
    </source>
</evidence>
<evidence type="ECO:0000255" key="2">
    <source>
        <dbReference type="PROSITE-ProRule" id="PRU01250"/>
    </source>
</evidence>
<evidence type="ECO:0000256" key="3">
    <source>
        <dbReference type="SAM" id="MobiDB-lite"/>
    </source>
</evidence>
<proteinExistence type="inferred from homology"/>
<name>CLPX_PROM0</name>
<gene>
    <name evidence="1" type="primary">clpX</name>
    <name type="ordered locus">P9301_18471</name>
</gene>
<keyword id="KW-0067">ATP-binding</keyword>
<keyword id="KW-0143">Chaperone</keyword>
<keyword id="KW-0479">Metal-binding</keyword>
<keyword id="KW-0547">Nucleotide-binding</keyword>
<keyword id="KW-1185">Reference proteome</keyword>
<keyword id="KW-0862">Zinc</keyword>
<organism>
    <name type="scientific">Prochlorococcus marinus (strain MIT 9301)</name>
    <dbReference type="NCBI Taxonomy" id="167546"/>
    <lineage>
        <taxon>Bacteria</taxon>
        <taxon>Bacillati</taxon>
        <taxon>Cyanobacteriota</taxon>
        <taxon>Cyanophyceae</taxon>
        <taxon>Synechococcales</taxon>
        <taxon>Prochlorococcaceae</taxon>
        <taxon>Prochlorococcus</taxon>
    </lineage>
</organism>
<comment type="function">
    <text evidence="1">ATP-dependent specificity component of the Clp protease. It directs the protease to specific substrates. Can perform chaperone functions in the absence of ClpP.</text>
</comment>
<comment type="subunit">
    <text evidence="1">Component of the ClpX-ClpP complex. Forms a hexameric ring that, in the presence of ATP, binds to fourteen ClpP subunits assembled into a disk-like structure with a central cavity, resembling the structure of eukaryotic proteasomes.</text>
</comment>
<comment type="similarity">
    <text evidence="1">Belongs to the ClpX chaperone family.</text>
</comment>
<accession>A3PFE5</accession>
<feature type="chain" id="PRO_1000024612" description="ATP-dependent Clp protease ATP-binding subunit ClpX">
    <location>
        <begin position="1"/>
        <end position="455"/>
    </location>
</feature>
<feature type="domain" description="ClpX-type ZB" evidence="2">
    <location>
        <begin position="1"/>
        <end position="51"/>
    </location>
</feature>
<feature type="region of interest" description="Disordered" evidence="3">
    <location>
        <begin position="52"/>
        <end position="75"/>
    </location>
</feature>
<feature type="binding site" evidence="2">
    <location>
        <position position="10"/>
    </location>
    <ligand>
        <name>Zn(2+)</name>
        <dbReference type="ChEBI" id="CHEBI:29105"/>
    </ligand>
</feature>
<feature type="binding site" evidence="2">
    <location>
        <position position="13"/>
    </location>
    <ligand>
        <name>Zn(2+)</name>
        <dbReference type="ChEBI" id="CHEBI:29105"/>
    </ligand>
</feature>
<feature type="binding site" evidence="2">
    <location>
        <position position="32"/>
    </location>
    <ligand>
        <name>Zn(2+)</name>
        <dbReference type="ChEBI" id="CHEBI:29105"/>
    </ligand>
</feature>
<feature type="binding site" evidence="2">
    <location>
        <position position="35"/>
    </location>
    <ligand>
        <name>Zn(2+)</name>
        <dbReference type="ChEBI" id="CHEBI:29105"/>
    </ligand>
</feature>
<feature type="binding site" evidence="1">
    <location>
        <begin position="146"/>
        <end position="153"/>
    </location>
    <ligand>
        <name>ATP</name>
        <dbReference type="ChEBI" id="CHEBI:30616"/>
    </ligand>
</feature>
<sequence length="455" mass="50596">MAKFDAHLKCSFCGKSQDQVRKLIAGPGVYICDECIDLCNEILDEELLDNQANTNNSPQVKKKLPTDNPKKSVPLELTSIPKPLEIKSFLDNQVVGQESAKKILSVAVYNHYKRLAWKFKEENKNSNSKDSQATKLQKSNILLIGPTGSGKTLLAQTLAEFLDVPFAVADATTLTEAGYVGEDVENILLRLLQKSEMNVELAQKGIIYIDEIDKIARKSENPSITRDVSGEGVQQALLKMLEGTIANVPPQGGRKHPYHDCIQIDTSQILFICGGAFIGLEDIVQKRMGKHSIGFTTNSDQNKVDTKKIVDPRDALKNLELDDLVKYGLIPEFIGRIPVCAVLDRLTKETLESILTQPRDALVKQFKTLLSMDNVELSFEPDSVEAIANEAYKRKTGARALRSIIEELMLDIMYTLPSEENVKEFTITKKMVDNLFSSKIVKLPSGSKRVIKESA</sequence>
<protein>
    <recommendedName>
        <fullName evidence="1">ATP-dependent Clp protease ATP-binding subunit ClpX</fullName>
    </recommendedName>
</protein>
<dbReference type="EMBL" id="CP000576">
    <property type="protein sequence ID" value="ABO18470.1"/>
    <property type="molecule type" value="Genomic_DNA"/>
</dbReference>
<dbReference type="RefSeq" id="WP_011863753.1">
    <property type="nucleotide sequence ID" value="NC_009091.1"/>
</dbReference>
<dbReference type="SMR" id="A3PFE5"/>
<dbReference type="STRING" id="167546.P9301_18471"/>
<dbReference type="KEGG" id="pmg:P9301_18471"/>
<dbReference type="eggNOG" id="COG1219">
    <property type="taxonomic scope" value="Bacteria"/>
</dbReference>
<dbReference type="HOGENOM" id="CLU_014218_8_2_3"/>
<dbReference type="OrthoDB" id="9804062at2"/>
<dbReference type="Proteomes" id="UP000001430">
    <property type="component" value="Chromosome"/>
</dbReference>
<dbReference type="GO" id="GO:0009376">
    <property type="term" value="C:HslUV protease complex"/>
    <property type="evidence" value="ECO:0007669"/>
    <property type="project" value="TreeGrafter"/>
</dbReference>
<dbReference type="GO" id="GO:0005524">
    <property type="term" value="F:ATP binding"/>
    <property type="evidence" value="ECO:0007669"/>
    <property type="project" value="UniProtKB-UniRule"/>
</dbReference>
<dbReference type="GO" id="GO:0016887">
    <property type="term" value="F:ATP hydrolysis activity"/>
    <property type="evidence" value="ECO:0007669"/>
    <property type="project" value="InterPro"/>
</dbReference>
<dbReference type="GO" id="GO:0140662">
    <property type="term" value="F:ATP-dependent protein folding chaperone"/>
    <property type="evidence" value="ECO:0007669"/>
    <property type="project" value="InterPro"/>
</dbReference>
<dbReference type="GO" id="GO:0046983">
    <property type="term" value="F:protein dimerization activity"/>
    <property type="evidence" value="ECO:0007669"/>
    <property type="project" value="InterPro"/>
</dbReference>
<dbReference type="GO" id="GO:0051082">
    <property type="term" value="F:unfolded protein binding"/>
    <property type="evidence" value="ECO:0007669"/>
    <property type="project" value="UniProtKB-UniRule"/>
</dbReference>
<dbReference type="GO" id="GO:0008270">
    <property type="term" value="F:zinc ion binding"/>
    <property type="evidence" value="ECO:0007669"/>
    <property type="project" value="InterPro"/>
</dbReference>
<dbReference type="GO" id="GO:0051301">
    <property type="term" value="P:cell division"/>
    <property type="evidence" value="ECO:0007669"/>
    <property type="project" value="TreeGrafter"/>
</dbReference>
<dbReference type="GO" id="GO:0051603">
    <property type="term" value="P:proteolysis involved in protein catabolic process"/>
    <property type="evidence" value="ECO:0007669"/>
    <property type="project" value="TreeGrafter"/>
</dbReference>
<dbReference type="CDD" id="cd19497">
    <property type="entry name" value="RecA-like_ClpX"/>
    <property type="match status" value="1"/>
</dbReference>
<dbReference type="FunFam" id="1.10.8.60:FF:000002">
    <property type="entry name" value="ATP-dependent Clp protease ATP-binding subunit ClpX"/>
    <property type="match status" value="1"/>
</dbReference>
<dbReference type="FunFam" id="3.40.50.300:FF:000005">
    <property type="entry name" value="ATP-dependent Clp protease ATP-binding subunit ClpX"/>
    <property type="match status" value="1"/>
</dbReference>
<dbReference type="Gene3D" id="1.10.8.60">
    <property type="match status" value="1"/>
</dbReference>
<dbReference type="Gene3D" id="6.20.220.10">
    <property type="entry name" value="ClpX chaperone, C4-type zinc finger domain"/>
    <property type="match status" value="1"/>
</dbReference>
<dbReference type="Gene3D" id="3.40.50.300">
    <property type="entry name" value="P-loop containing nucleotide triphosphate hydrolases"/>
    <property type="match status" value="1"/>
</dbReference>
<dbReference type="HAMAP" id="MF_00175">
    <property type="entry name" value="ClpX"/>
    <property type="match status" value="1"/>
</dbReference>
<dbReference type="InterPro" id="IPR003593">
    <property type="entry name" value="AAA+_ATPase"/>
</dbReference>
<dbReference type="InterPro" id="IPR050052">
    <property type="entry name" value="ATP-dep_Clp_protease_ClpX"/>
</dbReference>
<dbReference type="InterPro" id="IPR003959">
    <property type="entry name" value="ATPase_AAA_core"/>
</dbReference>
<dbReference type="InterPro" id="IPR019489">
    <property type="entry name" value="Clp_ATPase_C"/>
</dbReference>
<dbReference type="InterPro" id="IPR004487">
    <property type="entry name" value="Clp_protease_ATP-bd_su_ClpX"/>
</dbReference>
<dbReference type="InterPro" id="IPR046425">
    <property type="entry name" value="ClpX_bact"/>
</dbReference>
<dbReference type="InterPro" id="IPR027417">
    <property type="entry name" value="P-loop_NTPase"/>
</dbReference>
<dbReference type="InterPro" id="IPR010603">
    <property type="entry name" value="Znf_CppX_C4"/>
</dbReference>
<dbReference type="InterPro" id="IPR038366">
    <property type="entry name" value="Znf_CppX_C4_sf"/>
</dbReference>
<dbReference type="NCBIfam" id="TIGR00382">
    <property type="entry name" value="clpX"/>
    <property type="match status" value="1"/>
</dbReference>
<dbReference type="NCBIfam" id="NF003745">
    <property type="entry name" value="PRK05342.1"/>
    <property type="match status" value="1"/>
</dbReference>
<dbReference type="PANTHER" id="PTHR48102:SF7">
    <property type="entry name" value="ATP-DEPENDENT CLP PROTEASE ATP-BINDING SUBUNIT CLPX-LIKE, MITOCHONDRIAL"/>
    <property type="match status" value="1"/>
</dbReference>
<dbReference type="PANTHER" id="PTHR48102">
    <property type="entry name" value="ATP-DEPENDENT CLP PROTEASE ATP-BINDING SUBUNIT CLPX-LIKE, MITOCHONDRIAL-RELATED"/>
    <property type="match status" value="1"/>
</dbReference>
<dbReference type="Pfam" id="PF07724">
    <property type="entry name" value="AAA_2"/>
    <property type="match status" value="1"/>
</dbReference>
<dbReference type="Pfam" id="PF10431">
    <property type="entry name" value="ClpB_D2-small"/>
    <property type="match status" value="1"/>
</dbReference>
<dbReference type="Pfam" id="PF06689">
    <property type="entry name" value="zf-C4_ClpX"/>
    <property type="match status" value="1"/>
</dbReference>
<dbReference type="SMART" id="SM00382">
    <property type="entry name" value="AAA"/>
    <property type="match status" value="1"/>
</dbReference>
<dbReference type="SMART" id="SM01086">
    <property type="entry name" value="ClpB_D2-small"/>
    <property type="match status" value="1"/>
</dbReference>
<dbReference type="SMART" id="SM00994">
    <property type="entry name" value="zf-C4_ClpX"/>
    <property type="match status" value="1"/>
</dbReference>
<dbReference type="SUPFAM" id="SSF57716">
    <property type="entry name" value="Glucocorticoid receptor-like (DNA-binding domain)"/>
    <property type="match status" value="1"/>
</dbReference>
<dbReference type="SUPFAM" id="SSF52540">
    <property type="entry name" value="P-loop containing nucleoside triphosphate hydrolases"/>
    <property type="match status" value="1"/>
</dbReference>
<dbReference type="PROSITE" id="PS51902">
    <property type="entry name" value="CLPX_ZB"/>
    <property type="match status" value="1"/>
</dbReference>
<reference key="1">
    <citation type="journal article" date="2007" name="PLoS Genet.">
        <title>Patterns and implications of gene gain and loss in the evolution of Prochlorococcus.</title>
        <authorList>
            <person name="Kettler G.C."/>
            <person name="Martiny A.C."/>
            <person name="Huang K."/>
            <person name="Zucker J."/>
            <person name="Coleman M.L."/>
            <person name="Rodrigue S."/>
            <person name="Chen F."/>
            <person name="Lapidus A."/>
            <person name="Ferriera S."/>
            <person name="Johnson J."/>
            <person name="Steglich C."/>
            <person name="Church G.M."/>
            <person name="Richardson P."/>
            <person name="Chisholm S.W."/>
        </authorList>
    </citation>
    <scope>NUCLEOTIDE SEQUENCE [LARGE SCALE GENOMIC DNA]</scope>
    <source>
        <strain>MIT 9301</strain>
    </source>
</reference>